<reference key="1">
    <citation type="journal article" date="1995" name="J. Eukaryot. Microbiol.">
        <title>Preliminary characterisation of chlorarachniophyte mitochondrial DNA.</title>
        <authorList>
            <person name="Gilson R."/>
            <person name="Waller R.F."/>
            <person name="McFadden G.I."/>
        </authorList>
    </citation>
    <scope>NUCLEOTIDE SEQUENCE [GENOMIC DNA]</scope>
</reference>
<evidence type="ECO:0000256" key="1">
    <source>
        <dbReference type="SAM" id="MobiDB-lite"/>
    </source>
</evidence>
<evidence type="ECO:0000305" key="2"/>
<comment type="function">
    <text>Protein S12 is involved in the translation initiation step.</text>
</comment>
<comment type="subcellular location">
    <subcellularLocation>
        <location>Mitochondrion</location>
    </subcellularLocation>
</comment>
<comment type="similarity">
    <text evidence="2">Belongs to the universal ribosomal protein uS12 family.</text>
</comment>
<geneLocation type="mitochondrion"/>
<organism>
    <name type="scientific">Bigelowiella natans</name>
    <name type="common">Pedinomonas minutissima</name>
    <name type="synonym">Chlorarachnion sp. (strain CCMP621)</name>
    <dbReference type="NCBI Taxonomy" id="227086"/>
    <lineage>
        <taxon>Eukaryota</taxon>
        <taxon>Sar</taxon>
        <taxon>Rhizaria</taxon>
        <taxon>Cercozoa</taxon>
        <taxon>Chlorarachniophyceae</taxon>
        <taxon>Bigelowiella</taxon>
    </lineage>
</organism>
<protein>
    <recommendedName>
        <fullName evidence="2">Small ribosomal subunit protein uS12m</fullName>
    </recommendedName>
    <alternativeName>
        <fullName>Ribosomal protein S12, mitochondrial</fullName>
    </alternativeName>
</protein>
<name>RT12_BIGNA</name>
<gene>
    <name type="primary">RPS12</name>
</gene>
<proteinExistence type="inferred from homology"/>
<accession>P48943</accession>
<keyword id="KW-0496">Mitochondrion</keyword>
<keyword id="KW-0687">Ribonucleoprotein</keyword>
<keyword id="KW-0689">Ribosomal protein</keyword>
<dbReference type="EMBL" id="U36908">
    <property type="protein sequence ID" value="AAD05575.1"/>
    <property type="molecule type" value="Genomic_DNA"/>
</dbReference>
<dbReference type="SMR" id="P48943"/>
<dbReference type="GO" id="GO:0005739">
    <property type="term" value="C:mitochondrion"/>
    <property type="evidence" value="ECO:0007669"/>
    <property type="project" value="UniProtKB-SubCell"/>
</dbReference>
<dbReference type="GO" id="GO:0015935">
    <property type="term" value="C:small ribosomal subunit"/>
    <property type="evidence" value="ECO:0007669"/>
    <property type="project" value="InterPro"/>
</dbReference>
<dbReference type="GO" id="GO:0003735">
    <property type="term" value="F:structural constituent of ribosome"/>
    <property type="evidence" value="ECO:0007669"/>
    <property type="project" value="InterPro"/>
</dbReference>
<dbReference type="GO" id="GO:0006412">
    <property type="term" value="P:translation"/>
    <property type="evidence" value="ECO:0007669"/>
    <property type="project" value="InterPro"/>
</dbReference>
<dbReference type="CDD" id="cd03368">
    <property type="entry name" value="Ribosomal_S12"/>
    <property type="match status" value="1"/>
</dbReference>
<dbReference type="FunFam" id="2.40.50.140:FF:000099">
    <property type="entry name" value="Ribosomal protein S12, mitochondrial"/>
    <property type="match status" value="1"/>
</dbReference>
<dbReference type="Gene3D" id="2.40.50.140">
    <property type="entry name" value="Nucleic acid-binding proteins"/>
    <property type="match status" value="1"/>
</dbReference>
<dbReference type="InterPro" id="IPR012340">
    <property type="entry name" value="NA-bd_OB-fold"/>
</dbReference>
<dbReference type="InterPro" id="IPR006032">
    <property type="entry name" value="Ribosomal_uS12"/>
</dbReference>
<dbReference type="InterPro" id="IPR005679">
    <property type="entry name" value="Ribosomal_uS12_bac"/>
</dbReference>
<dbReference type="NCBIfam" id="TIGR00981">
    <property type="entry name" value="rpsL_bact"/>
    <property type="match status" value="1"/>
</dbReference>
<dbReference type="PANTHER" id="PTHR11652">
    <property type="entry name" value="30S RIBOSOMAL PROTEIN S12 FAMILY MEMBER"/>
    <property type="match status" value="1"/>
</dbReference>
<dbReference type="Pfam" id="PF00164">
    <property type="entry name" value="Ribosom_S12_S23"/>
    <property type="match status" value="1"/>
</dbReference>
<dbReference type="PIRSF" id="PIRSF002133">
    <property type="entry name" value="Ribosomal_S12/S23"/>
    <property type="match status" value="1"/>
</dbReference>
<dbReference type="PRINTS" id="PR01034">
    <property type="entry name" value="RIBOSOMALS12"/>
</dbReference>
<dbReference type="SUPFAM" id="SSF50249">
    <property type="entry name" value="Nucleic acid-binding proteins"/>
    <property type="match status" value="1"/>
</dbReference>
<dbReference type="PROSITE" id="PS00055">
    <property type="entry name" value="RIBOSOMAL_S12"/>
    <property type="match status" value="1"/>
</dbReference>
<sequence>MATSNQMGANTRSKKKKKNLKKALLGCPQKRGVCMRLLTRSPKKPNSAQRRVAKVRLSTKRVIFAHIPGEGHNLSPFSVVLVRGGNVRDLPGVRYKTIRGVKDLAPVLSRTNGRSKYGTKRPKVHT</sequence>
<feature type="chain" id="PRO_0000146435" description="Small ribosomal subunit protein uS12m">
    <location>
        <begin position="1"/>
        <end position="126"/>
    </location>
</feature>
<feature type="region of interest" description="Disordered" evidence="1">
    <location>
        <begin position="1"/>
        <end position="21"/>
    </location>
</feature>
<feature type="compositionally biased region" description="Polar residues" evidence="1">
    <location>
        <begin position="1"/>
        <end position="11"/>
    </location>
</feature>
<feature type="compositionally biased region" description="Basic residues" evidence="1">
    <location>
        <begin position="12"/>
        <end position="21"/>
    </location>
</feature>